<evidence type="ECO:0000255" key="1">
    <source>
        <dbReference type="HAMAP-Rule" id="MF_01874"/>
    </source>
</evidence>
<sequence>MFDVTLLILLGLAALGFISHNTTVAVSILVLIIVRVTPLSTFFPWIEKQGLSIGIIILTIGVMAPIASGTLPPSTLIHSFLNWKSLVAIAVGVIVSWLGGRGVTLMGSQSQLVAGLLVGTVLGVALFRGVPVGPLIAAGLVSLIVGKQ</sequence>
<reference key="1">
    <citation type="journal article" date="2009" name="J. Mol. Biol.">
        <title>Genome sequences of Escherichia coli B strains REL606 and BL21(DE3).</title>
        <authorList>
            <person name="Jeong H."/>
            <person name="Barbe V."/>
            <person name="Lee C.H."/>
            <person name="Vallenet D."/>
            <person name="Yu D.S."/>
            <person name="Choi S.H."/>
            <person name="Couloux A."/>
            <person name="Lee S.W."/>
            <person name="Yoon S.H."/>
            <person name="Cattolico L."/>
            <person name="Hur C.G."/>
            <person name="Park H.S."/>
            <person name="Segurens B."/>
            <person name="Kim S.C."/>
            <person name="Oh T.K."/>
            <person name="Lenski R.E."/>
            <person name="Studier F.W."/>
            <person name="Daegelen P."/>
            <person name="Kim J.F."/>
        </authorList>
    </citation>
    <scope>NUCLEOTIDE SEQUENCE [LARGE SCALE GENOMIC DNA]</scope>
    <source>
        <strain>B / REL606</strain>
    </source>
</reference>
<protein>
    <recommendedName>
        <fullName evidence="1">UPF0756 membrane protein YeaL</fullName>
    </recommendedName>
</protein>
<comment type="subcellular location">
    <subcellularLocation>
        <location evidence="1">Cell membrane</location>
        <topology evidence="1">Multi-pass membrane protein</topology>
    </subcellularLocation>
</comment>
<comment type="similarity">
    <text evidence="1">Belongs to the UPF0756 family.</text>
</comment>
<feature type="chain" id="PRO_0000388856" description="UPF0756 membrane protein YeaL">
    <location>
        <begin position="1"/>
        <end position="148"/>
    </location>
</feature>
<feature type="transmembrane region" description="Helical" evidence="1">
    <location>
        <begin position="14"/>
        <end position="34"/>
    </location>
</feature>
<feature type="transmembrane region" description="Helical" evidence="1">
    <location>
        <begin position="51"/>
        <end position="71"/>
    </location>
</feature>
<feature type="transmembrane region" description="Helical" evidence="1">
    <location>
        <begin position="86"/>
        <end position="106"/>
    </location>
</feature>
<feature type="transmembrane region" description="Helical" evidence="1">
    <location>
        <begin position="121"/>
        <end position="141"/>
    </location>
</feature>
<keyword id="KW-1003">Cell membrane</keyword>
<keyword id="KW-0472">Membrane</keyword>
<keyword id="KW-0812">Transmembrane</keyword>
<keyword id="KW-1133">Transmembrane helix</keyword>
<accession>C6UJA3</accession>
<proteinExistence type="inferred from homology"/>
<gene>
    <name evidence="1" type="primary">yeaL</name>
    <name type="ordered locus">ECB_01758</name>
</gene>
<organism>
    <name type="scientific">Escherichia coli (strain B / REL606)</name>
    <dbReference type="NCBI Taxonomy" id="413997"/>
    <lineage>
        <taxon>Bacteria</taxon>
        <taxon>Pseudomonadati</taxon>
        <taxon>Pseudomonadota</taxon>
        <taxon>Gammaproteobacteria</taxon>
        <taxon>Enterobacterales</taxon>
        <taxon>Enterobacteriaceae</taxon>
        <taxon>Escherichia</taxon>
    </lineage>
</organism>
<name>YEAL_ECOBR</name>
<dbReference type="EMBL" id="CP000819">
    <property type="protein sequence ID" value="ACT39419.1"/>
    <property type="molecule type" value="Genomic_DNA"/>
</dbReference>
<dbReference type="RefSeq" id="WP_000460710.1">
    <property type="nucleotide sequence ID" value="NC_012967.1"/>
</dbReference>
<dbReference type="KEGG" id="ebr:ECB_01758"/>
<dbReference type="HOGENOM" id="CLU_125889_0_0_6"/>
<dbReference type="BioCyc" id="ECOL413997:GCQD-1958-MONOMER"/>
<dbReference type="GO" id="GO:0005886">
    <property type="term" value="C:plasma membrane"/>
    <property type="evidence" value="ECO:0007669"/>
    <property type="project" value="UniProtKB-SubCell"/>
</dbReference>
<dbReference type="HAMAP" id="MF_01874">
    <property type="entry name" value="UPF0756"/>
    <property type="match status" value="1"/>
</dbReference>
<dbReference type="InterPro" id="IPR007382">
    <property type="entry name" value="UPF0756_TM"/>
</dbReference>
<dbReference type="PANTHER" id="PTHR38452">
    <property type="entry name" value="UPF0756 MEMBRANE PROTEIN YEAL"/>
    <property type="match status" value="1"/>
</dbReference>
<dbReference type="PANTHER" id="PTHR38452:SF1">
    <property type="entry name" value="UPF0756 MEMBRANE PROTEIN YEAL"/>
    <property type="match status" value="1"/>
</dbReference>
<dbReference type="Pfam" id="PF04284">
    <property type="entry name" value="DUF441"/>
    <property type="match status" value="1"/>
</dbReference>